<keyword id="KW-0025">Alternative splicing</keyword>
<keyword id="KW-0472">Membrane</keyword>
<keyword id="KW-1185">Reference proteome</keyword>
<keyword id="KW-0762">Sugar transport</keyword>
<keyword id="KW-0812">Transmembrane</keyword>
<keyword id="KW-1133">Transmembrane helix</keyword>
<keyword id="KW-0813">Transport</keyword>
<protein>
    <recommendedName>
        <fullName>Sugar transporter ERD6-like 10</fullName>
    </recommendedName>
</protein>
<name>EDL10_ARATH</name>
<evidence type="ECO:0000250" key="1"/>
<evidence type="ECO:0000255" key="2"/>
<evidence type="ECO:0000305" key="3"/>
<gene>
    <name type="ordered locus">At3g05160</name>
    <name type="ORF">T12H1.13</name>
</gene>
<reference key="1">
    <citation type="journal article" date="2000" name="Nature">
        <title>Sequence and analysis of chromosome 3 of the plant Arabidopsis thaliana.</title>
        <authorList>
            <person name="Salanoubat M."/>
            <person name="Lemcke K."/>
            <person name="Rieger M."/>
            <person name="Ansorge W."/>
            <person name="Unseld M."/>
            <person name="Fartmann B."/>
            <person name="Valle G."/>
            <person name="Bloecker H."/>
            <person name="Perez-Alonso M."/>
            <person name="Obermaier B."/>
            <person name="Delseny M."/>
            <person name="Boutry M."/>
            <person name="Grivell L.A."/>
            <person name="Mache R."/>
            <person name="Puigdomenech P."/>
            <person name="De Simone V."/>
            <person name="Choisne N."/>
            <person name="Artiguenave F."/>
            <person name="Robert C."/>
            <person name="Brottier P."/>
            <person name="Wincker P."/>
            <person name="Cattolico L."/>
            <person name="Weissenbach J."/>
            <person name="Saurin W."/>
            <person name="Quetier F."/>
            <person name="Schaefer M."/>
            <person name="Mueller-Auer S."/>
            <person name="Gabel C."/>
            <person name="Fuchs M."/>
            <person name="Benes V."/>
            <person name="Wurmbach E."/>
            <person name="Drzonek H."/>
            <person name="Erfle H."/>
            <person name="Jordan N."/>
            <person name="Bangert S."/>
            <person name="Wiedelmann R."/>
            <person name="Kranz H."/>
            <person name="Voss H."/>
            <person name="Holland R."/>
            <person name="Brandt P."/>
            <person name="Nyakatura G."/>
            <person name="Vezzi A."/>
            <person name="D'Angelo M."/>
            <person name="Pallavicini A."/>
            <person name="Toppo S."/>
            <person name="Simionati B."/>
            <person name="Conrad A."/>
            <person name="Hornischer K."/>
            <person name="Kauer G."/>
            <person name="Loehnert T.-H."/>
            <person name="Nordsiek G."/>
            <person name="Reichelt J."/>
            <person name="Scharfe M."/>
            <person name="Schoen O."/>
            <person name="Bargues M."/>
            <person name="Terol J."/>
            <person name="Climent J."/>
            <person name="Navarro P."/>
            <person name="Collado C."/>
            <person name="Perez-Perez A."/>
            <person name="Ottenwaelder B."/>
            <person name="Duchemin D."/>
            <person name="Cooke R."/>
            <person name="Laudie M."/>
            <person name="Berger-Llauro C."/>
            <person name="Purnelle B."/>
            <person name="Masuy D."/>
            <person name="de Haan M."/>
            <person name="Maarse A.C."/>
            <person name="Alcaraz J.-P."/>
            <person name="Cottet A."/>
            <person name="Casacuberta E."/>
            <person name="Monfort A."/>
            <person name="Argiriou A."/>
            <person name="Flores M."/>
            <person name="Liguori R."/>
            <person name="Vitale D."/>
            <person name="Mannhaupt G."/>
            <person name="Haase D."/>
            <person name="Schoof H."/>
            <person name="Rudd S."/>
            <person name="Zaccaria P."/>
            <person name="Mewes H.-W."/>
            <person name="Mayer K.F.X."/>
            <person name="Kaul S."/>
            <person name="Town C.D."/>
            <person name="Koo H.L."/>
            <person name="Tallon L.J."/>
            <person name="Jenkins J."/>
            <person name="Rooney T."/>
            <person name="Rizzo M."/>
            <person name="Walts A."/>
            <person name="Utterback T."/>
            <person name="Fujii C.Y."/>
            <person name="Shea T.P."/>
            <person name="Creasy T.H."/>
            <person name="Haas B."/>
            <person name="Maiti R."/>
            <person name="Wu D."/>
            <person name="Peterson J."/>
            <person name="Van Aken S."/>
            <person name="Pai G."/>
            <person name="Militscher J."/>
            <person name="Sellers P."/>
            <person name="Gill J.E."/>
            <person name="Feldblyum T.V."/>
            <person name="Preuss D."/>
            <person name="Lin X."/>
            <person name="Nierman W.C."/>
            <person name="Salzberg S.L."/>
            <person name="White O."/>
            <person name="Venter J.C."/>
            <person name="Fraser C.M."/>
            <person name="Kaneko T."/>
            <person name="Nakamura Y."/>
            <person name="Sato S."/>
            <person name="Kato T."/>
            <person name="Asamizu E."/>
            <person name="Sasamoto S."/>
            <person name="Kimura T."/>
            <person name="Idesawa K."/>
            <person name="Kawashima K."/>
            <person name="Kishida Y."/>
            <person name="Kiyokawa C."/>
            <person name="Kohara M."/>
            <person name="Matsumoto M."/>
            <person name="Matsuno A."/>
            <person name="Muraki A."/>
            <person name="Nakayama S."/>
            <person name="Nakazaki N."/>
            <person name="Shinpo S."/>
            <person name="Takeuchi C."/>
            <person name="Wada T."/>
            <person name="Watanabe A."/>
            <person name="Yamada M."/>
            <person name="Yasuda M."/>
            <person name="Tabata S."/>
        </authorList>
    </citation>
    <scope>NUCLEOTIDE SEQUENCE [LARGE SCALE GENOMIC DNA]</scope>
    <source>
        <strain>cv. Columbia</strain>
    </source>
</reference>
<reference key="2">
    <citation type="journal article" date="2017" name="Plant J.">
        <title>Araport11: a complete reannotation of the Arabidopsis thaliana reference genome.</title>
        <authorList>
            <person name="Cheng C.Y."/>
            <person name="Krishnakumar V."/>
            <person name="Chan A.P."/>
            <person name="Thibaud-Nissen F."/>
            <person name="Schobel S."/>
            <person name="Town C.D."/>
        </authorList>
    </citation>
    <scope>GENOME REANNOTATION</scope>
    <source>
        <strain>cv. Columbia</strain>
    </source>
</reference>
<reference key="3">
    <citation type="journal article" date="2003" name="Science">
        <title>Empirical analysis of transcriptional activity in the Arabidopsis genome.</title>
        <authorList>
            <person name="Yamada K."/>
            <person name="Lim J."/>
            <person name="Dale J.M."/>
            <person name="Chen H."/>
            <person name="Shinn P."/>
            <person name="Palm C.J."/>
            <person name="Southwick A.M."/>
            <person name="Wu H.C."/>
            <person name="Kim C.J."/>
            <person name="Nguyen M."/>
            <person name="Pham P.K."/>
            <person name="Cheuk R.F."/>
            <person name="Karlin-Newmann G."/>
            <person name="Liu S.X."/>
            <person name="Lam B."/>
            <person name="Sakano H."/>
            <person name="Wu T."/>
            <person name="Yu G."/>
            <person name="Miranda M."/>
            <person name="Quach H.L."/>
            <person name="Tripp M."/>
            <person name="Chang C.H."/>
            <person name="Lee J.M."/>
            <person name="Toriumi M.J."/>
            <person name="Chan M.M."/>
            <person name="Tang C.C."/>
            <person name="Onodera C.S."/>
            <person name="Deng J.M."/>
            <person name="Akiyama K."/>
            <person name="Ansari Y."/>
            <person name="Arakawa T."/>
            <person name="Banh J."/>
            <person name="Banno F."/>
            <person name="Bowser L."/>
            <person name="Brooks S.Y."/>
            <person name="Carninci P."/>
            <person name="Chao Q."/>
            <person name="Choy N."/>
            <person name="Enju A."/>
            <person name="Goldsmith A.D."/>
            <person name="Gurjal M."/>
            <person name="Hansen N.F."/>
            <person name="Hayashizaki Y."/>
            <person name="Johnson-Hopson C."/>
            <person name="Hsuan V.W."/>
            <person name="Iida K."/>
            <person name="Karnes M."/>
            <person name="Khan S."/>
            <person name="Koesema E."/>
            <person name="Ishida J."/>
            <person name="Jiang P.X."/>
            <person name="Jones T."/>
            <person name="Kawai J."/>
            <person name="Kamiya A."/>
            <person name="Meyers C."/>
            <person name="Nakajima M."/>
            <person name="Narusaka M."/>
            <person name="Seki M."/>
            <person name="Sakurai T."/>
            <person name="Satou M."/>
            <person name="Tamse R."/>
            <person name="Vaysberg M."/>
            <person name="Wallender E.K."/>
            <person name="Wong C."/>
            <person name="Yamamura Y."/>
            <person name="Yuan S."/>
            <person name="Shinozaki K."/>
            <person name="Davis R.W."/>
            <person name="Theologis A."/>
            <person name="Ecker J.R."/>
        </authorList>
    </citation>
    <scope>NUCLEOTIDE SEQUENCE [LARGE SCALE MRNA]</scope>
    <source>
        <strain>cv. Columbia</strain>
    </source>
</reference>
<reference key="4">
    <citation type="journal article" date="2006" name="BMC Evol. Biol.">
        <title>The monosaccharide transporter gene family in land plants is ancient and shows differential subfamily expression and expansion across lineages.</title>
        <authorList>
            <person name="Johnson D.A."/>
            <person name="Hill J.P."/>
            <person name="Thomas M.A."/>
        </authorList>
    </citation>
    <scope>GENE FAMILY</scope>
</reference>
<feature type="chain" id="PRO_0000259860" description="Sugar transporter ERD6-like 10">
    <location>
        <begin position="1"/>
        <end position="458"/>
    </location>
</feature>
<feature type="transmembrane region" description="Helical; Name=1" evidence="2">
    <location>
        <begin position="17"/>
        <end position="37"/>
    </location>
</feature>
<feature type="transmembrane region" description="Helical; Name=2" evidence="2">
    <location>
        <begin position="66"/>
        <end position="86"/>
    </location>
</feature>
<feature type="transmembrane region" description="Helical; Name=3" evidence="2">
    <location>
        <begin position="96"/>
        <end position="116"/>
    </location>
</feature>
<feature type="transmembrane region" description="Helical; Name=4" evidence="2">
    <location>
        <begin position="119"/>
        <end position="139"/>
    </location>
</feature>
<feature type="transmembrane region" description="Helical; Name=5" evidence="2">
    <location>
        <begin position="150"/>
        <end position="170"/>
    </location>
</feature>
<feature type="transmembrane region" description="Helical; Name=6" evidence="2">
    <location>
        <begin position="174"/>
        <end position="194"/>
    </location>
</feature>
<feature type="transmembrane region" description="Helical; Name=7" evidence="2">
    <location>
        <begin position="257"/>
        <end position="277"/>
    </location>
</feature>
<feature type="transmembrane region" description="Helical; Name=8" evidence="2">
    <location>
        <begin position="292"/>
        <end position="312"/>
    </location>
</feature>
<feature type="transmembrane region" description="Helical; Name=9" evidence="2">
    <location>
        <begin position="319"/>
        <end position="339"/>
    </location>
</feature>
<feature type="transmembrane region" description="Helical; Name=10" evidence="2">
    <location>
        <begin position="350"/>
        <end position="370"/>
    </location>
</feature>
<feature type="transmembrane region" description="Helical; Name=11" evidence="2">
    <location>
        <begin position="393"/>
        <end position="413"/>
    </location>
</feature>
<feature type="transmembrane region" description="Helical; Name=12" evidence="2">
    <location>
        <begin position="419"/>
        <end position="439"/>
    </location>
</feature>
<proteinExistence type="evidence at transcript level"/>
<organism>
    <name type="scientific">Arabidopsis thaliana</name>
    <name type="common">Mouse-ear cress</name>
    <dbReference type="NCBI Taxonomy" id="3702"/>
    <lineage>
        <taxon>Eukaryota</taxon>
        <taxon>Viridiplantae</taxon>
        <taxon>Streptophyta</taxon>
        <taxon>Embryophyta</taxon>
        <taxon>Tracheophyta</taxon>
        <taxon>Spermatophyta</taxon>
        <taxon>Magnoliopsida</taxon>
        <taxon>eudicotyledons</taxon>
        <taxon>Gunneridae</taxon>
        <taxon>Pentapetalae</taxon>
        <taxon>rosids</taxon>
        <taxon>malvids</taxon>
        <taxon>Brassicales</taxon>
        <taxon>Brassicaceae</taxon>
        <taxon>Camelineae</taxon>
        <taxon>Arabidopsis</taxon>
    </lineage>
</organism>
<dbReference type="EMBL" id="AC009177">
    <property type="protein sequence ID" value="AAF27022.1"/>
    <property type="status" value="ALT_SEQ"/>
    <property type="molecule type" value="Genomic_DNA"/>
</dbReference>
<dbReference type="EMBL" id="CP002686">
    <property type="protein sequence ID" value="AEE74193.1"/>
    <property type="molecule type" value="Genomic_DNA"/>
</dbReference>
<dbReference type="EMBL" id="AY058056">
    <property type="protein sequence ID" value="AAL24164.1"/>
    <property type="molecule type" value="mRNA"/>
</dbReference>
<dbReference type="EMBL" id="BT002699">
    <property type="protein sequence ID" value="AAO11615.1"/>
    <property type="molecule type" value="mRNA"/>
</dbReference>
<dbReference type="RefSeq" id="NP_566247.1">
    <molecule id="Q93Z80-1"/>
    <property type="nucleotide sequence ID" value="NM_111388.4"/>
</dbReference>
<dbReference type="SMR" id="Q93Z80"/>
<dbReference type="FunCoup" id="Q93Z80">
    <property type="interactions" value="718"/>
</dbReference>
<dbReference type="STRING" id="3702.Q93Z80"/>
<dbReference type="PaxDb" id="3702-AT3G05160.1"/>
<dbReference type="ProteomicsDB" id="247062">
    <molecule id="Q93Z80-1"/>
</dbReference>
<dbReference type="EnsemblPlants" id="AT3G05160.1">
    <molecule id="Q93Z80-1"/>
    <property type="protein sequence ID" value="AT3G05160.1"/>
    <property type="gene ID" value="AT3G05160"/>
</dbReference>
<dbReference type="GeneID" id="819679"/>
<dbReference type="Gramene" id="AT3G05160.1">
    <molecule id="Q93Z80-1"/>
    <property type="protein sequence ID" value="AT3G05160.1"/>
    <property type="gene ID" value="AT3G05160"/>
</dbReference>
<dbReference type="KEGG" id="ath:AT3G05160"/>
<dbReference type="Araport" id="AT3G05160"/>
<dbReference type="TAIR" id="AT3G05160"/>
<dbReference type="eggNOG" id="KOG0254">
    <property type="taxonomic scope" value="Eukaryota"/>
</dbReference>
<dbReference type="InParanoid" id="Q93Z80"/>
<dbReference type="OMA" id="VINWRFL"/>
<dbReference type="OrthoDB" id="6612291at2759"/>
<dbReference type="PhylomeDB" id="Q93Z80"/>
<dbReference type="PRO" id="PR:Q93Z80"/>
<dbReference type="Proteomes" id="UP000006548">
    <property type="component" value="Chromosome 3"/>
</dbReference>
<dbReference type="ExpressionAtlas" id="Q93Z80">
    <property type="expression patterns" value="baseline and differential"/>
</dbReference>
<dbReference type="GO" id="GO:0016020">
    <property type="term" value="C:membrane"/>
    <property type="evidence" value="ECO:0007669"/>
    <property type="project" value="UniProtKB-SubCell"/>
</dbReference>
<dbReference type="GO" id="GO:0051119">
    <property type="term" value="F:sugar transmembrane transporter activity"/>
    <property type="evidence" value="ECO:0007669"/>
    <property type="project" value="InterPro"/>
</dbReference>
<dbReference type="CDD" id="cd17358">
    <property type="entry name" value="MFS_GLUT6_8_Class3_like"/>
    <property type="match status" value="1"/>
</dbReference>
<dbReference type="FunFam" id="1.20.1250.20:FF:000043">
    <property type="entry name" value="sugar transporter ERD6-like 6"/>
    <property type="match status" value="1"/>
</dbReference>
<dbReference type="Gene3D" id="1.20.1250.20">
    <property type="entry name" value="MFS general substrate transporter like domains"/>
    <property type="match status" value="1"/>
</dbReference>
<dbReference type="InterPro" id="IPR020846">
    <property type="entry name" value="MFS_dom"/>
</dbReference>
<dbReference type="InterPro" id="IPR044775">
    <property type="entry name" value="MFS_ERD6/Tret1-like"/>
</dbReference>
<dbReference type="InterPro" id="IPR005828">
    <property type="entry name" value="MFS_sugar_transport-like"/>
</dbReference>
<dbReference type="InterPro" id="IPR036259">
    <property type="entry name" value="MFS_trans_sf"/>
</dbReference>
<dbReference type="InterPro" id="IPR050549">
    <property type="entry name" value="MFS_Trehalose_Transporter"/>
</dbReference>
<dbReference type="InterPro" id="IPR003663">
    <property type="entry name" value="Sugar/inositol_transpt"/>
</dbReference>
<dbReference type="InterPro" id="IPR005829">
    <property type="entry name" value="Sugar_transporter_CS"/>
</dbReference>
<dbReference type="NCBIfam" id="TIGR00879">
    <property type="entry name" value="SP"/>
    <property type="match status" value="1"/>
</dbReference>
<dbReference type="PANTHER" id="PTHR48021">
    <property type="match status" value="1"/>
</dbReference>
<dbReference type="PANTHER" id="PTHR48021:SF50">
    <property type="entry name" value="SUGAR TRANSPORTER ERD6-LIKE 10-RELATED"/>
    <property type="match status" value="1"/>
</dbReference>
<dbReference type="Pfam" id="PF00083">
    <property type="entry name" value="Sugar_tr"/>
    <property type="match status" value="1"/>
</dbReference>
<dbReference type="PRINTS" id="PR00171">
    <property type="entry name" value="SUGRTRNSPORT"/>
</dbReference>
<dbReference type="SUPFAM" id="SSF103473">
    <property type="entry name" value="MFS general substrate transporter"/>
    <property type="match status" value="1"/>
</dbReference>
<dbReference type="PROSITE" id="PS50850">
    <property type="entry name" value="MFS"/>
    <property type="match status" value="1"/>
</dbReference>
<dbReference type="PROSITE" id="PS00216">
    <property type="entry name" value="SUGAR_TRANSPORT_1"/>
    <property type="match status" value="1"/>
</dbReference>
<sequence length="458" mass="50299">MEEGLLRHENDRDDRRITACVILSTFVAVCSSFSYGCANGYTSGAETAIMKELDLSMAQFSAFGSFLNLGGAVGALFSGQLAVILGRRRTLWACDLFCIFGWLSIAFAKNVLWLDLGRISLGIGVGLTSYVVPVYIAEITPKHVRGAFSASTLLLQNSGISLIYFFGTVINWRVLAVIGALPCFIPVIGIYFIPESPRWLAKIGSVKEVENSLHRLRGKDADVSDEAAEIQVMTKMLEEDSKSSFCDMFQKKYRRTLVVGIGLMLIQQLSGASGITYYSNAIFRKAGFSERLGSMIFGVFVIPKALVGLILVDRWGRRPLLLASAVGMSIGSLLIGVSFTLQEMNLFPEFIPVFVFINILVYFGFFAIGIGGLPWIIMSEIFPINIKVSAGSIVALTSWTTGWFVSYGFNFMFEWSAQGTFYIFAMVGGLSLLFIWMLVPETKGQSLEELQASLTGTT</sequence>
<accession>Q93Z80</accession>
<accession>Q9MAA3</accession>
<comment type="function">
    <text evidence="3">Sugar transporter.</text>
</comment>
<comment type="subcellular location">
    <subcellularLocation>
        <location evidence="1">Membrane</location>
        <topology evidence="1">Multi-pass membrane protein</topology>
    </subcellularLocation>
</comment>
<comment type="alternative products">
    <event type="alternative splicing"/>
    <isoform>
        <id>Q93Z80-1</id>
        <name>1</name>
        <sequence type="displayed"/>
    </isoform>
    <text>A number of isoforms are produced. According to EST sequences.</text>
</comment>
<comment type="similarity">
    <text evidence="3">Belongs to the major facilitator superfamily. Sugar transporter (TC 2.A.1.1) family.</text>
</comment>
<comment type="sequence caution" evidence="3">
    <conflict type="erroneous gene model prediction">
        <sequence resource="EMBL-CDS" id="AAF27022"/>
    </conflict>
    <text>The predicted gene At3g05160 has been split into 2 genes: At3g05160 and At3g05165.</text>
</comment>